<reference key="1">
    <citation type="journal article" date="1997" name="Nature">
        <title>The nucleotide sequence of Saccharomyces cerevisiae chromosome XIII.</title>
        <authorList>
            <person name="Bowman S."/>
            <person name="Churcher C.M."/>
            <person name="Badcock K."/>
            <person name="Brown D."/>
            <person name="Chillingworth T."/>
            <person name="Connor R."/>
            <person name="Dedman K."/>
            <person name="Devlin K."/>
            <person name="Gentles S."/>
            <person name="Hamlin N."/>
            <person name="Hunt S."/>
            <person name="Jagels K."/>
            <person name="Lye G."/>
            <person name="Moule S."/>
            <person name="Odell C."/>
            <person name="Pearson D."/>
            <person name="Rajandream M.A."/>
            <person name="Rice P."/>
            <person name="Skelton J."/>
            <person name="Walsh S.V."/>
            <person name="Whitehead S."/>
            <person name="Barrell B.G."/>
        </authorList>
    </citation>
    <scope>NUCLEOTIDE SEQUENCE [LARGE SCALE GENOMIC DNA]</scope>
    <source>
        <strain>ATCC 204508 / S288c</strain>
    </source>
</reference>
<reference key="2">
    <citation type="journal article" date="2014" name="G3 (Bethesda)">
        <title>The reference genome sequence of Saccharomyces cerevisiae: Then and now.</title>
        <authorList>
            <person name="Engel S.R."/>
            <person name="Dietrich F.S."/>
            <person name="Fisk D.G."/>
            <person name="Binkley G."/>
            <person name="Balakrishnan R."/>
            <person name="Costanzo M.C."/>
            <person name="Dwight S.S."/>
            <person name="Hitz B.C."/>
            <person name="Karra K."/>
            <person name="Nash R.S."/>
            <person name="Weng S."/>
            <person name="Wong E.D."/>
            <person name="Lloyd P."/>
            <person name="Skrzypek M.S."/>
            <person name="Miyasato S.R."/>
            <person name="Simison M."/>
            <person name="Cherry J.M."/>
        </authorList>
    </citation>
    <scope>GENOME REANNOTATION</scope>
    <source>
        <strain>ATCC 204508 / S288c</strain>
    </source>
</reference>
<reference key="3">
    <citation type="journal article" date="2007" name="Genome Res.">
        <title>Approaching a complete repository of sequence-verified protein-encoding clones for Saccharomyces cerevisiae.</title>
        <authorList>
            <person name="Hu Y."/>
            <person name="Rolfs A."/>
            <person name="Bhullar B."/>
            <person name="Murthy T.V.S."/>
            <person name="Zhu C."/>
            <person name="Berger M.F."/>
            <person name="Camargo A.A."/>
            <person name="Kelley F."/>
            <person name="McCarron S."/>
            <person name="Jepson D."/>
            <person name="Richardson A."/>
            <person name="Raphael J."/>
            <person name="Moreira D."/>
            <person name="Taycher E."/>
            <person name="Zuo D."/>
            <person name="Mohr S."/>
            <person name="Kane M.F."/>
            <person name="Williamson J."/>
            <person name="Simpson A.J.G."/>
            <person name="Bulyk M.L."/>
            <person name="Harlow E."/>
            <person name="Marsischky G."/>
            <person name="Kolodner R.D."/>
            <person name="LaBaer J."/>
        </authorList>
    </citation>
    <scope>NUCLEOTIDE SEQUENCE [GENOMIC DNA]</scope>
    <source>
        <strain>ATCC 204508 / S288c</strain>
    </source>
</reference>
<reference key="4">
    <citation type="journal article" date="2011" name="Mol. Cell">
        <title>Dual function of Sdh3 in the respiratory chain and TIM22 protein translocase of the mitochondrial inner membrane.</title>
        <authorList>
            <person name="Gebert N."/>
            <person name="Gebert M."/>
            <person name="Oeljeklaus S."/>
            <person name="von der Malsburg K."/>
            <person name="Stroud D.A."/>
            <person name="Kulawiak B."/>
            <person name="Wirth C."/>
            <person name="Zahedi R.P."/>
            <person name="Dolezal P."/>
            <person name="Wiese S."/>
            <person name="Simon O."/>
            <person name="Schulze-Specking A."/>
            <person name="Truscott K.N."/>
            <person name="Sickmann A."/>
            <person name="Rehling P."/>
            <person name="Guiard B."/>
            <person name="Hunte C."/>
            <person name="Warscheid B."/>
            <person name="van der Laan M."/>
            <person name="Pfanner N."/>
            <person name="Wiedemann N."/>
        </authorList>
    </citation>
    <scope>DISRUPTION PHENOTYPE</scope>
</reference>
<proteinExistence type="inferred from homology"/>
<dbReference type="EMBL" id="Z49702">
    <property type="protein sequence ID" value="CAA89756.1"/>
    <property type="molecule type" value="Genomic_DNA"/>
</dbReference>
<dbReference type="EMBL" id="AY557968">
    <property type="protein sequence ID" value="AAS56294.1"/>
    <property type="molecule type" value="Genomic_DNA"/>
</dbReference>
<dbReference type="EMBL" id="BK006946">
    <property type="protein sequence ID" value="DAA10015.1"/>
    <property type="molecule type" value="Genomic_DNA"/>
</dbReference>
<dbReference type="PIR" id="S54580">
    <property type="entry name" value="S54580"/>
</dbReference>
<dbReference type="RefSeq" id="NP_013836.1">
    <property type="nucleotide sequence ID" value="NM_001182618.1"/>
</dbReference>
<dbReference type="SMR" id="Q04487"/>
<dbReference type="BioGRID" id="35294">
    <property type="interactions" value="50"/>
</dbReference>
<dbReference type="DIP" id="DIP-5316N"/>
<dbReference type="FunCoup" id="Q04487">
    <property type="interactions" value="459"/>
</dbReference>
<dbReference type="IntAct" id="Q04487">
    <property type="interactions" value="1"/>
</dbReference>
<dbReference type="MINT" id="Q04487"/>
<dbReference type="STRING" id="4932.YMR118C"/>
<dbReference type="PaxDb" id="4932-YMR118C"/>
<dbReference type="PeptideAtlas" id="Q04487"/>
<dbReference type="EnsemblFungi" id="YMR118C_mRNA">
    <property type="protein sequence ID" value="YMR118C"/>
    <property type="gene ID" value="YMR118C"/>
</dbReference>
<dbReference type="GeneID" id="855145"/>
<dbReference type="KEGG" id="sce:YMR118C"/>
<dbReference type="AGR" id="SGD:S000004724"/>
<dbReference type="SGD" id="S000004724">
    <property type="gene designation" value="SHH3"/>
</dbReference>
<dbReference type="VEuPathDB" id="FungiDB:YMR118C"/>
<dbReference type="eggNOG" id="KOG0449">
    <property type="taxonomic scope" value="Eukaryota"/>
</dbReference>
<dbReference type="GeneTree" id="ENSGT00390000000566"/>
<dbReference type="HOGENOM" id="CLU_094691_0_0_1"/>
<dbReference type="InParanoid" id="Q04487"/>
<dbReference type="OMA" id="PHDATHY"/>
<dbReference type="OrthoDB" id="588261at2759"/>
<dbReference type="BioCyc" id="YEAST:G3O-32813-MONOMER"/>
<dbReference type="BioGRID-ORCS" id="855145">
    <property type="hits" value="0 hits in 10 CRISPR screens"/>
</dbReference>
<dbReference type="PRO" id="PR:Q04487"/>
<dbReference type="Proteomes" id="UP000002311">
    <property type="component" value="Chromosome XIII"/>
</dbReference>
<dbReference type="RNAct" id="Q04487">
    <property type="molecule type" value="protein"/>
</dbReference>
<dbReference type="GO" id="GO:0005743">
    <property type="term" value="C:mitochondrial inner membrane"/>
    <property type="evidence" value="ECO:0007669"/>
    <property type="project" value="UniProtKB-SubCell"/>
</dbReference>
<dbReference type="GO" id="GO:0005739">
    <property type="term" value="C:mitochondrion"/>
    <property type="evidence" value="ECO:0007005"/>
    <property type="project" value="SGD"/>
</dbReference>
<dbReference type="GO" id="GO:0045273">
    <property type="term" value="C:respiratory chain complex II (succinate dehydrogenase)"/>
    <property type="evidence" value="ECO:0000318"/>
    <property type="project" value="GO_Central"/>
</dbReference>
<dbReference type="GO" id="GO:0009055">
    <property type="term" value="F:electron transfer activity"/>
    <property type="evidence" value="ECO:0007669"/>
    <property type="project" value="InterPro"/>
</dbReference>
<dbReference type="GO" id="GO:0046872">
    <property type="term" value="F:metal ion binding"/>
    <property type="evidence" value="ECO:0007669"/>
    <property type="project" value="UniProtKB-KW"/>
</dbReference>
<dbReference type="GO" id="GO:0048038">
    <property type="term" value="F:quinone binding"/>
    <property type="evidence" value="ECO:0007669"/>
    <property type="project" value="UniProtKB-KW"/>
</dbReference>
<dbReference type="GO" id="GO:0006121">
    <property type="term" value="P:mitochondrial electron transport, succinate to ubiquinone"/>
    <property type="evidence" value="ECO:0000318"/>
    <property type="project" value="GO_Central"/>
</dbReference>
<dbReference type="GO" id="GO:0006099">
    <property type="term" value="P:tricarboxylic acid cycle"/>
    <property type="evidence" value="ECO:0007669"/>
    <property type="project" value="InterPro"/>
</dbReference>
<dbReference type="CDD" id="cd03499">
    <property type="entry name" value="SQR_TypeC_SdhC"/>
    <property type="match status" value="1"/>
</dbReference>
<dbReference type="FunFam" id="1.20.1300.10:FF:000008">
    <property type="entry name" value="Succinate dehydrogenase cytochrome b560 subunit"/>
    <property type="match status" value="1"/>
</dbReference>
<dbReference type="Gene3D" id="1.20.1300.10">
    <property type="entry name" value="Fumarate reductase/succinate dehydrogenase, transmembrane subunit"/>
    <property type="match status" value="1"/>
</dbReference>
<dbReference type="InterPro" id="IPR034804">
    <property type="entry name" value="SQR/QFR_C/D"/>
</dbReference>
<dbReference type="InterPro" id="IPR018495">
    <property type="entry name" value="Succ_DH_cyt_bsu_CS"/>
</dbReference>
<dbReference type="InterPro" id="IPR014314">
    <property type="entry name" value="Succ_DH_cytb556"/>
</dbReference>
<dbReference type="InterPro" id="IPR000701">
    <property type="entry name" value="SuccDH_FuR_B_TM-su"/>
</dbReference>
<dbReference type="NCBIfam" id="TIGR02970">
    <property type="entry name" value="succ_dehyd_cytB"/>
    <property type="match status" value="1"/>
</dbReference>
<dbReference type="PANTHER" id="PTHR10978">
    <property type="entry name" value="SUCCINATE DEHYDROGENASE CYTOCHROME B560 SUBUNIT"/>
    <property type="match status" value="1"/>
</dbReference>
<dbReference type="PANTHER" id="PTHR10978:SF5">
    <property type="entry name" value="SUCCINATE DEHYDROGENASE CYTOCHROME B560 SUBUNIT, MITOCHONDRIAL"/>
    <property type="match status" value="1"/>
</dbReference>
<dbReference type="Pfam" id="PF01127">
    <property type="entry name" value="Sdh_cyt"/>
    <property type="match status" value="1"/>
</dbReference>
<dbReference type="SUPFAM" id="SSF81343">
    <property type="entry name" value="Fumarate reductase respiratory complex transmembrane subunits"/>
    <property type="match status" value="1"/>
</dbReference>
<dbReference type="PROSITE" id="PS01000">
    <property type="entry name" value="SDH_CYT_1"/>
    <property type="match status" value="1"/>
</dbReference>
<dbReference type="PROSITE" id="PS01001">
    <property type="entry name" value="SDH_CYT_2"/>
    <property type="match status" value="1"/>
</dbReference>
<protein>
    <recommendedName>
        <fullName evidence="5">Mitochondrial inner membrane protein SHH3</fullName>
    </recommendedName>
    <alternativeName>
        <fullName evidence="4">SDH3 homolog</fullName>
    </alternativeName>
</protein>
<gene>
    <name evidence="4" type="primary">SHH3</name>
    <name evidence="6" type="ordered locus">YMR118C</name>
    <name type="ORF">YM9718.17C</name>
</gene>
<name>SHH3_YEAST</name>
<organism>
    <name type="scientific">Saccharomyces cerevisiae (strain ATCC 204508 / S288c)</name>
    <name type="common">Baker's yeast</name>
    <dbReference type="NCBI Taxonomy" id="559292"/>
    <lineage>
        <taxon>Eukaryota</taxon>
        <taxon>Fungi</taxon>
        <taxon>Dikarya</taxon>
        <taxon>Ascomycota</taxon>
        <taxon>Saccharomycotina</taxon>
        <taxon>Saccharomycetes</taxon>
        <taxon>Saccharomycetales</taxon>
        <taxon>Saccharomycetaceae</taxon>
        <taxon>Saccharomyces</taxon>
    </lineage>
</organism>
<keyword id="KW-0349">Heme</keyword>
<keyword id="KW-0408">Iron</keyword>
<keyword id="KW-0472">Membrane</keyword>
<keyword id="KW-0479">Metal-binding</keyword>
<keyword id="KW-0496">Mitochondrion</keyword>
<keyword id="KW-0999">Mitochondrion inner membrane</keyword>
<keyword id="KW-0874">Quinone</keyword>
<keyword id="KW-1185">Reference proteome</keyword>
<keyword id="KW-0809">Transit peptide</keyword>
<keyword id="KW-0812">Transmembrane</keyword>
<keyword id="KW-1133">Transmembrane helix</keyword>
<feature type="transit peptide" description="Mitochondrion" evidence="2">
    <location>
        <begin position="1"/>
        <end position="53"/>
    </location>
</feature>
<feature type="chain" id="PRO_0000003639" description="Mitochondrial inner membrane protein SHH3">
    <location>
        <begin position="54"/>
        <end position="196"/>
    </location>
</feature>
<feature type="topological domain" description="Mitochondrial matrix" evidence="1">
    <location>
        <begin position="54"/>
        <end position="97"/>
    </location>
</feature>
<feature type="transmembrane region" description="Helical" evidence="2">
    <location>
        <begin position="98"/>
        <end position="118"/>
    </location>
</feature>
<feature type="topological domain" description="Mitochondrial intermembrane" evidence="1">
    <location>
        <begin position="119"/>
        <end position="137"/>
    </location>
</feature>
<feature type="transmembrane region" description="Helical" evidence="2">
    <location>
        <begin position="138"/>
        <end position="160"/>
    </location>
</feature>
<feature type="topological domain" description="Mitochondrial matrix" evidence="1">
    <location>
        <begin position="161"/>
        <end position="174"/>
    </location>
</feature>
<feature type="transmembrane region" description="Helical" evidence="2">
    <location>
        <begin position="175"/>
        <end position="195"/>
    </location>
</feature>
<feature type="topological domain" description="Mitochondrial intermembrane" evidence="1">
    <location>
        <position position="196"/>
    </location>
</feature>
<feature type="binding site" evidence="1">
    <location>
        <position position="91"/>
    </location>
    <ligand>
        <name>a ubiquinone</name>
        <dbReference type="ChEBI" id="CHEBI:16389"/>
    </ligand>
</feature>
<feature type="binding site" evidence="1">
    <location>
        <position position="95"/>
    </location>
    <ligand>
        <name>a ubiquinone</name>
        <dbReference type="ChEBI" id="CHEBI:16389"/>
    </ligand>
</feature>
<feature type="binding site" description="axial binding residue" evidence="1">
    <location>
        <position position="154"/>
    </location>
    <ligand>
        <name>heme</name>
        <dbReference type="ChEBI" id="CHEBI:30413"/>
    </ligand>
    <ligandPart>
        <name>Fe</name>
        <dbReference type="ChEBI" id="CHEBI:18248"/>
    </ligandPart>
</feature>
<sequence>MKATIQRVTSVFGVPRASVFVPRISTPFILHNYISNGRMDLFSKEFHNGRVSKSDLWSSNKEEELLVSQRKKRPISPHLTVYEPEMSWYLSSLHRISGVLLALGFYAFTITLGVTTIMGMDTTFQDLNKWYHEKMPKWSQWVAKGSAAYLFAFHFGNGIRHLIWDMGYELTNRGVIKTGSIVLAGTLVLGTYLLAQ</sequence>
<comment type="function">
    <text evidence="4">Homolog of SDH3, but seems not to be a stoichiometric subunit of either the succinate dehydrogenase (SDH) complex or the mitochondrial inner membrane translocase TIM22 complex.</text>
</comment>
<comment type="subcellular location">
    <subcellularLocation>
        <location evidence="1">Mitochondrion inner membrane</location>
        <topology evidence="2">Multi-pass membrane protein</topology>
    </subcellularLocation>
</comment>
<comment type="disruption phenotype">
    <text evidence="3">Does not affect SDH or TIM22 complex formation.</text>
</comment>
<comment type="similarity">
    <text evidence="5">Belongs to the cytochrome b560 family.</text>
</comment>
<evidence type="ECO:0000250" key="1">
    <source>
        <dbReference type="UniProtKB" id="P33421"/>
    </source>
</evidence>
<evidence type="ECO:0000255" key="2"/>
<evidence type="ECO:0000269" key="3">
    <source>
    </source>
</evidence>
<evidence type="ECO:0000303" key="4">
    <source>
    </source>
</evidence>
<evidence type="ECO:0000305" key="5"/>
<evidence type="ECO:0000312" key="6">
    <source>
        <dbReference type="SGD" id="S000004724"/>
    </source>
</evidence>
<accession>Q04487</accession>
<accession>D6VZU1</accession>